<reference key="1">
    <citation type="journal article" date="2004" name="Mol. Plant Microbe Interact.">
        <title>The genome sequence of the Gram-positive sugarcane pathogen Leifsonia xyli subsp. xyli.</title>
        <authorList>
            <person name="Monteiro-Vitorello C.B."/>
            <person name="Camargo L.E.A."/>
            <person name="Van Sluys M.A."/>
            <person name="Kitajima J.P."/>
            <person name="Truffi D."/>
            <person name="do Amaral A.M."/>
            <person name="Harakava R."/>
            <person name="de Oliveira J.C.F."/>
            <person name="Wood D."/>
            <person name="de Oliveira M.C."/>
            <person name="Miyaki C.Y."/>
            <person name="Takita M.A."/>
            <person name="da Silva A.C.R."/>
            <person name="Furlan L.R."/>
            <person name="Carraro D.M."/>
            <person name="Camarotte G."/>
            <person name="Almeida N.F. Jr."/>
            <person name="Carrer H."/>
            <person name="Coutinho L.L."/>
            <person name="El-Dorry H.A."/>
            <person name="Ferro M.I.T."/>
            <person name="Gagliardi P.R."/>
            <person name="Giglioti E."/>
            <person name="Goldman M.H.S."/>
            <person name="Goldman G.H."/>
            <person name="Kimura E.T."/>
            <person name="Ferro E.S."/>
            <person name="Kuramae E.E."/>
            <person name="Lemos E.G.M."/>
            <person name="Lemos M.V.F."/>
            <person name="Mauro S.M.Z."/>
            <person name="Machado M.A."/>
            <person name="Marino C.L."/>
            <person name="Menck C.F."/>
            <person name="Nunes L.R."/>
            <person name="Oliveira R.C."/>
            <person name="Pereira G.G."/>
            <person name="Siqueira W."/>
            <person name="de Souza A.A."/>
            <person name="Tsai S.M."/>
            <person name="Zanca A.S."/>
            <person name="Simpson A.J.G."/>
            <person name="Brumbley S.M."/>
            <person name="Setubal J.C."/>
        </authorList>
    </citation>
    <scope>NUCLEOTIDE SEQUENCE [LARGE SCALE GENOMIC DNA]</scope>
    <source>
        <strain>CTCB07</strain>
    </source>
</reference>
<dbReference type="EC" id="5.99.-.-" evidence="1"/>
<dbReference type="EMBL" id="AE016822">
    <property type="protein sequence ID" value="AAT89576.1"/>
    <property type="molecule type" value="Genomic_DNA"/>
</dbReference>
<dbReference type="RefSeq" id="WP_011186564.1">
    <property type="nucleotide sequence ID" value="NC_006087.1"/>
</dbReference>
<dbReference type="SMR" id="Q6ADH0"/>
<dbReference type="STRING" id="281090.Lxx18350"/>
<dbReference type="KEGG" id="lxx:Lxx18350"/>
<dbReference type="eggNOG" id="COG4044">
    <property type="taxonomic scope" value="Bacteria"/>
</dbReference>
<dbReference type="HOGENOM" id="CLU_085483_0_1_11"/>
<dbReference type="Proteomes" id="UP000001306">
    <property type="component" value="Chromosome"/>
</dbReference>
<dbReference type="GO" id="GO:0020037">
    <property type="term" value="F:heme binding"/>
    <property type="evidence" value="ECO:0007669"/>
    <property type="project" value="UniProtKB-UniRule"/>
</dbReference>
<dbReference type="GO" id="GO:0046872">
    <property type="term" value="F:metal ion binding"/>
    <property type="evidence" value="ECO:0007669"/>
    <property type="project" value="UniProtKB-KW"/>
</dbReference>
<dbReference type="GO" id="GO:0062213">
    <property type="term" value="F:peroxynitrite isomerase activity"/>
    <property type="evidence" value="ECO:0007669"/>
    <property type="project" value="UniProtKB-UniRule"/>
</dbReference>
<dbReference type="CDD" id="cd07828">
    <property type="entry name" value="lipocalin_heme-bd-THAP4-like"/>
    <property type="match status" value="1"/>
</dbReference>
<dbReference type="Gene3D" id="2.40.128.20">
    <property type="match status" value="1"/>
</dbReference>
<dbReference type="HAMAP" id="MF_01297">
    <property type="entry name" value="nitrobindin"/>
    <property type="match status" value="1"/>
</dbReference>
<dbReference type="InterPro" id="IPR012674">
    <property type="entry name" value="Calycin"/>
</dbReference>
<dbReference type="InterPro" id="IPR022939">
    <property type="entry name" value="Nb(III)_bact/plant"/>
</dbReference>
<dbReference type="InterPro" id="IPR045165">
    <property type="entry name" value="Nitrobindin"/>
</dbReference>
<dbReference type="InterPro" id="IPR014878">
    <property type="entry name" value="THAP4-like_heme-bd"/>
</dbReference>
<dbReference type="PANTHER" id="PTHR15854:SF4">
    <property type="entry name" value="PEROXYNITRITE ISOMERASE THAP4"/>
    <property type="match status" value="1"/>
</dbReference>
<dbReference type="PANTHER" id="PTHR15854">
    <property type="entry name" value="THAP4 PROTEIN"/>
    <property type="match status" value="1"/>
</dbReference>
<dbReference type="Pfam" id="PF08768">
    <property type="entry name" value="THAP4_heme-bd"/>
    <property type="match status" value="1"/>
</dbReference>
<dbReference type="SUPFAM" id="SSF50814">
    <property type="entry name" value="Lipocalins"/>
    <property type="match status" value="1"/>
</dbReference>
<feature type="chain" id="PRO_0000356910" description="Peroxynitrite isomerase">
    <location>
        <begin position="1"/>
        <end position="198"/>
    </location>
</feature>
<feature type="short sequence motif" description="GXWXGXG" evidence="1">
    <location>
        <begin position="20"/>
        <end position="26"/>
    </location>
</feature>
<feature type="binding site" description="axial binding residue" evidence="1">
    <location>
        <position position="189"/>
    </location>
    <ligand>
        <name>heme b</name>
        <dbReference type="ChEBI" id="CHEBI:60344"/>
    </ligand>
    <ligandPart>
        <name>Fe</name>
        <dbReference type="ChEBI" id="CHEBI:18248"/>
    </ligandPart>
</feature>
<name>NB_LEIXX</name>
<proteinExistence type="inferred from homology"/>
<protein>
    <recommendedName>
        <fullName>Peroxynitrite isomerase</fullName>
        <ecNumber evidence="1">5.99.-.-</ecNumber>
    </recommendedName>
    <alternativeName>
        <fullName>Ferric nitrobindin</fullName>
        <shortName>Nb(III)</shortName>
    </alternativeName>
</protein>
<organism>
    <name type="scientific">Leifsonia xyli subsp. xyli (strain CTCB07)</name>
    <dbReference type="NCBI Taxonomy" id="281090"/>
    <lineage>
        <taxon>Bacteria</taxon>
        <taxon>Bacillati</taxon>
        <taxon>Actinomycetota</taxon>
        <taxon>Actinomycetes</taxon>
        <taxon>Micrococcales</taxon>
        <taxon>Microbacteriaceae</taxon>
        <taxon>Leifsonia</taxon>
    </lineage>
</organism>
<gene>
    <name type="ordered locus">Lxx18350</name>
</gene>
<sequence>MIEIPTDLPAELVPLSWLIGVWEGTGVLDYAIGDDHTEREFGQRIGFSHDGQNYLAYSSTAWLLDSDRTPLAAESGYWRLSRTLIEGDAGPGMLPGVGPRPFGTAQSVEALRASHGGFDIDVSIVHPNGVSELYIGRVNGPRIDLATDAVVRTAGAKEYTAATRLYGLVENHLLWAWDIAALGQELRTHASARLAKAE</sequence>
<comment type="function">
    <text evidence="1">Heme-binding protein able to scavenge peroxynitrite and to protect free L-tyrosine against peroxynitrite-mediated nitration, by acting as a peroxynitrite isomerase that converts peroxynitrite to nitrate. Therefore, this protein likely plays a role in peroxynitrite sensing and in the detoxification of reactive nitrogen and oxygen species (RNS and ROS, respectively). Is able to bind nitric oxide (NO) in vitro, but may act as a sensor of peroxynitrite levels in vivo.</text>
</comment>
<comment type="catalytic activity">
    <reaction evidence="1">
        <text>peroxynitrite = nitrate</text>
        <dbReference type="Rhea" id="RHEA:63116"/>
        <dbReference type="ChEBI" id="CHEBI:17632"/>
        <dbReference type="ChEBI" id="CHEBI:25941"/>
    </reaction>
    <physiologicalReaction direction="left-to-right" evidence="1">
        <dbReference type="Rhea" id="RHEA:63117"/>
    </physiologicalReaction>
</comment>
<comment type="cofactor">
    <cofactor evidence="1">
        <name>heme b</name>
        <dbReference type="ChEBI" id="CHEBI:60344"/>
    </cofactor>
    <text evidence="1">Binds 1 heme b group per subunit, that coordinates a highly solvent-exposed Fe(III) atom.</text>
</comment>
<comment type="pathway">
    <text evidence="1">Nitrogen metabolism.</text>
</comment>
<comment type="subunit">
    <text evidence="1">Homodimer.</text>
</comment>
<comment type="domain">
    <text evidence="1">Forms a 10-stranded antiparallel beta-barrel structure able to accommodate a hydrophobic ligand in its interior. In fact, this fold hosts the heme group, which is located in a wide surface cleft.</text>
</comment>
<comment type="similarity">
    <text evidence="1">Belongs to the nitrobindin family.</text>
</comment>
<evidence type="ECO:0000255" key="1">
    <source>
        <dbReference type="HAMAP-Rule" id="MF_01297"/>
    </source>
</evidence>
<accession>Q6ADH0</accession>
<keyword id="KW-0349">Heme</keyword>
<keyword id="KW-0408">Iron</keyword>
<keyword id="KW-0413">Isomerase</keyword>
<keyword id="KW-0479">Metal-binding</keyword>
<keyword id="KW-1185">Reference proteome</keyword>